<feature type="chain" id="PRO_1000147048" description="Chaperonin GroEL">
    <location>
        <begin position="1"/>
        <end position="540"/>
    </location>
</feature>
<feature type="binding site" evidence="1">
    <location>
        <begin position="29"/>
        <end position="32"/>
    </location>
    <ligand>
        <name>ATP</name>
        <dbReference type="ChEBI" id="CHEBI:30616"/>
    </ligand>
</feature>
<feature type="binding site" evidence="1">
    <location>
        <begin position="86"/>
        <end position="90"/>
    </location>
    <ligand>
        <name>ATP</name>
        <dbReference type="ChEBI" id="CHEBI:30616"/>
    </ligand>
</feature>
<feature type="binding site" evidence="1">
    <location>
        <position position="413"/>
    </location>
    <ligand>
        <name>ATP</name>
        <dbReference type="ChEBI" id="CHEBI:30616"/>
    </ligand>
</feature>
<feature type="binding site" evidence="1">
    <location>
        <begin position="476"/>
        <end position="478"/>
    </location>
    <ligand>
        <name>ATP</name>
        <dbReference type="ChEBI" id="CHEBI:30616"/>
    </ligand>
</feature>
<feature type="binding site" evidence="1">
    <location>
        <position position="492"/>
    </location>
    <ligand>
        <name>ATP</name>
        <dbReference type="ChEBI" id="CHEBI:30616"/>
    </ligand>
</feature>
<reference key="1">
    <citation type="journal article" date="2010" name="Genome Biol.">
        <title>Structure and dynamics of the pan-genome of Streptococcus pneumoniae and closely related species.</title>
        <authorList>
            <person name="Donati C."/>
            <person name="Hiller N.L."/>
            <person name="Tettelin H."/>
            <person name="Muzzi A."/>
            <person name="Croucher N.J."/>
            <person name="Angiuoli S.V."/>
            <person name="Oggioni M."/>
            <person name="Dunning Hotopp J.C."/>
            <person name="Hu F.Z."/>
            <person name="Riley D.R."/>
            <person name="Covacci A."/>
            <person name="Mitchell T.J."/>
            <person name="Bentley S.D."/>
            <person name="Kilian M."/>
            <person name="Ehrlich G.D."/>
            <person name="Rappuoli R."/>
            <person name="Moxon E.R."/>
            <person name="Masignani V."/>
        </authorList>
    </citation>
    <scope>NUCLEOTIDE SEQUENCE [LARGE SCALE GENOMIC DNA]</scope>
    <source>
        <strain>P1031</strain>
    </source>
</reference>
<evidence type="ECO:0000255" key="1">
    <source>
        <dbReference type="HAMAP-Rule" id="MF_00600"/>
    </source>
</evidence>
<sequence>MSKEIKFSSDARSAMVRGVDILADTVKVTLGPKGRNVVLEKSFGSPLITNDGVTIAKEIELEDHFENMGAKLVSEVASKTNDIAGDGTTTATVLTQAIVREGIKNVTAGANPIGIRRGIETAVAAAVEALKNNAIPVANKEAIAQVAAVSSRSEKVGEYISEAMEKVGKDGVITIEESRGMETELEVVEGMQFDRGYLSQYMVTDSEKMVADLENPYILITDKKISNIQEILPLLESILQSNRPLLIIADDVDGEALPTLVLNKIRGTFNVVAVKAPGFGDRRKAMLEDIAILTGGTVITEDLGLELKDATIEALGQAARVTVDKDSTVIVEGAGNPEAISHRVAVIKSQIETTTSEFDREKLQERLAKLSGGVAVIKVGAATETELKEMKLRIEDALNATRAAVEEGIVAGGGTALANVIPAVATLELTGDEVTGRNIVLRALEEPVRQIAHNAGFEGSIVIDRLKNAELGIGFNAATGEWVNMIDQGIIDPVKVSRSALQNAASVASLILTTEAVVANKPEPVAPAPAMDPSMMGGMM</sequence>
<accession>C1CML7</accession>
<keyword id="KW-0067">ATP-binding</keyword>
<keyword id="KW-0143">Chaperone</keyword>
<keyword id="KW-0963">Cytoplasm</keyword>
<keyword id="KW-0413">Isomerase</keyword>
<keyword id="KW-0547">Nucleotide-binding</keyword>
<dbReference type="EC" id="5.6.1.7" evidence="1"/>
<dbReference type="EMBL" id="CP000920">
    <property type="protein sequence ID" value="ACO20952.1"/>
    <property type="molecule type" value="Genomic_DNA"/>
</dbReference>
<dbReference type="RefSeq" id="WP_000031577.1">
    <property type="nucleotide sequence ID" value="NC_012467.1"/>
</dbReference>
<dbReference type="SMR" id="C1CML7"/>
<dbReference type="KEGG" id="spp:SPP_1935"/>
<dbReference type="HOGENOM" id="CLU_016503_3_0_9"/>
<dbReference type="GO" id="GO:0005737">
    <property type="term" value="C:cytoplasm"/>
    <property type="evidence" value="ECO:0007669"/>
    <property type="project" value="UniProtKB-SubCell"/>
</dbReference>
<dbReference type="GO" id="GO:0005524">
    <property type="term" value="F:ATP binding"/>
    <property type="evidence" value="ECO:0007669"/>
    <property type="project" value="UniProtKB-UniRule"/>
</dbReference>
<dbReference type="GO" id="GO:0140662">
    <property type="term" value="F:ATP-dependent protein folding chaperone"/>
    <property type="evidence" value="ECO:0007669"/>
    <property type="project" value="InterPro"/>
</dbReference>
<dbReference type="GO" id="GO:0016853">
    <property type="term" value="F:isomerase activity"/>
    <property type="evidence" value="ECO:0007669"/>
    <property type="project" value="UniProtKB-KW"/>
</dbReference>
<dbReference type="GO" id="GO:0051082">
    <property type="term" value="F:unfolded protein binding"/>
    <property type="evidence" value="ECO:0007669"/>
    <property type="project" value="UniProtKB-UniRule"/>
</dbReference>
<dbReference type="GO" id="GO:0042026">
    <property type="term" value="P:protein refolding"/>
    <property type="evidence" value="ECO:0007669"/>
    <property type="project" value="UniProtKB-UniRule"/>
</dbReference>
<dbReference type="CDD" id="cd03344">
    <property type="entry name" value="GroEL"/>
    <property type="match status" value="1"/>
</dbReference>
<dbReference type="FunFam" id="1.10.560.10:FF:000001">
    <property type="entry name" value="60 kDa chaperonin"/>
    <property type="match status" value="1"/>
</dbReference>
<dbReference type="FunFam" id="3.50.7.10:FF:000001">
    <property type="entry name" value="60 kDa chaperonin"/>
    <property type="match status" value="1"/>
</dbReference>
<dbReference type="Gene3D" id="3.50.7.10">
    <property type="entry name" value="GroEL"/>
    <property type="match status" value="1"/>
</dbReference>
<dbReference type="Gene3D" id="1.10.560.10">
    <property type="entry name" value="GroEL-like equatorial domain"/>
    <property type="match status" value="1"/>
</dbReference>
<dbReference type="Gene3D" id="3.30.260.10">
    <property type="entry name" value="TCP-1-like chaperonin intermediate domain"/>
    <property type="match status" value="1"/>
</dbReference>
<dbReference type="HAMAP" id="MF_00600">
    <property type="entry name" value="CH60"/>
    <property type="match status" value="1"/>
</dbReference>
<dbReference type="InterPro" id="IPR018370">
    <property type="entry name" value="Chaperonin_Cpn60_CS"/>
</dbReference>
<dbReference type="InterPro" id="IPR001844">
    <property type="entry name" value="Cpn60/GroEL"/>
</dbReference>
<dbReference type="InterPro" id="IPR002423">
    <property type="entry name" value="Cpn60/GroEL/TCP-1"/>
</dbReference>
<dbReference type="InterPro" id="IPR027409">
    <property type="entry name" value="GroEL-like_apical_dom_sf"/>
</dbReference>
<dbReference type="InterPro" id="IPR027413">
    <property type="entry name" value="GROEL-like_equatorial_sf"/>
</dbReference>
<dbReference type="InterPro" id="IPR027410">
    <property type="entry name" value="TCP-1-like_intermed_sf"/>
</dbReference>
<dbReference type="NCBIfam" id="TIGR02348">
    <property type="entry name" value="GroEL"/>
    <property type="match status" value="1"/>
</dbReference>
<dbReference type="NCBIfam" id="NF000592">
    <property type="entry name" value="PRK00013.1"/>
    <property type="match status" value="1"/>
</dbReference>
<dbReference type="NCBIfam" id="NF009487">
    <property type="entry name" value="PRK12849.1"/>
    <property type="match status" value="1"/>
</dbReference>
<dbReference type="NCBIfam" id="NF009488">
    <property type="entry name" value="PRK12850.1"/>
    <property type="match status" value="1"/>
</dbReference>
<dbReference type="NCBIfam" id="NF009489">
    <property type="entry name" value="PRK12851.1"/>
    <property type="match status" value="1"/>
</dbReference>
<dbReference type="PANTHER" id="PTHR45633">
    <property type="entry name" value="60 KDA HEAT SHOCK PROTEIN, MITOCHONDRIAL"/>
    <property type="match status" value="1"/>
</dbReference>
<dbReference type="Pfam" id="PF00118">
    <property type="entry name" value="Cpn60_TCP1"/>
    <property type="match status" value="1"/>
</dbReference>
<dbReference type="PRINTS" id="PR00298">
    <property type="entry name" value="CHAPERONIN60"/>
</dbReference>
<dbReference type="SUPFAM" id="SSF52029">
    <property type="entry name" value="GroEL apical domain-like"/>
    <property type="match status" value="1"/>
</dbReference>
<dbReference type="SUPFAM" id="SSF48592">
    <property type="entry name" value="GroEL equatorial domain-like"/>
    <property type="match status" value="1"/>
</dbReference>
<dbReference type="SUPFAM" id="SSF54849">
    <property type="entry name" value="GroEL-intermediate domain like"/>
    <property type="match status" value="1"/>
</dbReference>
<dbReference type="PROSITE" id="PS00296">
    <property type="entry name" value="CHAPERONINS_CPN60"/>
    <property type="match status" value="1"/>
</dbReference>
<comment type="function">
    <text evidence="1">Together with its co-chaperonin GroES, plays an essential role in assisting protein folding. The GroEL-GroES system forms a nano-cage that allows encapsulation of the non-native substrate proteins and provides a physical environment optimized to promote and accelerate protein folding.</text>
</comment>
<comment type="catalytic activity">
    <reaction evidence="1">
        <text>ATP + H2O + a folded polypeptide = ADP + phosphate + an unfolded polypeptide.</text>
        <dbReference type="EC" id="5.6.1.7"/>
    </reaction>
</comment>
<comment type="subunit">
    <text evidence="1">Forms a cylinder of 14 subunits composed of two heptameric rings stacked back-to-back. Interacts with the co-chaperonin GroES.</text>
</comment>
<comment type="subcellular location">
    <subcellularLocation>
        <location evidence="1">Cytoplasm</location>
    </subcellularLocation>
</comment>
<comment type="similarity">
    <text evidence="1">Belongs to the chaperonin (HSP60) family.</text>
</comment>
<gene>
    <name evidence="1" type="primary">groEL</name>
    <name evidence="1" type="synonym">groL</name>
    <name type="ordered locus">SPP_1935</name>
</gene>
<proteinExistence type="inferred from homology"/>
<name>CH60_STRZP</name>
<protein>
    <recommendedName>
        <fullName evidence="1">Chaperonin GroEL</fullName>
        <ecNumber evidence="1">5.6.1.7</ecNumber>
    </recommendedName>
    <alternativeName>
        <fullName evidence="1">60 kDa chaperonin</fullName>
    </alternativeName>
    <alternativeName>
        <fullName evidence="1">Chaperonin-60</fullName>
        <shortName evidence="1">Cpn60</shortName>
    </alternativeName>
</protein>
<organism>
    <name type="scientific">Streptococcus pneumoniae (strain P1031)</name>
    <dbReference type="NCBI Taxonomy" id="488223"/>
    <lineage>
        <taxon>Bacteria</taxon>
        <taxon>Bacillati</taxon>
        <taxon>Bacillota</taxon>
        <taxon>Bacilli</taxon>
        <taxon>Lactobacillales</taxon>
        <taxon>Streptococcaceae</taxon>
        <taxon>Streptococcus</taxon>
    </lineage>
</organism>